<evidence type="ECO:0000255" key="1">
    <source>
        <dbReference type="HAMAP-Rule" id="MF_00248"/>
    </source>
</evidence>
<name>HSLV_BRUO2</name>
<dbReference type="EC" id="3.4.25.2" evidence="1"/>
<dbReference type="EMBL" id="CP000708">
    <property type="protein sequence ID" value="ABQ60935.1"/>
    <property type="molecule type" value="Genomic_DNA"/>
</dbReference>
<dbReference type="RefSeq" id="WP_006014474.1">
    <property type="nucleotide sequence ID" value="NC_009505.1"/>
</dbReference>
<dbReference type="SMR" id="A5VT38"/>
<dbReference type="MEROPS" id="T01.006"/>
<dbReference type="GeneID" id="45125334"/>
<dbReference type="KEGG" id="bov:BOV_2000"/>
<dbReference type="HOGENOM" id="CLU_093872_1_0_5"/>
<dbReference type="PhylomeDB" id="A5VT38"/>
<dbReference type="Proteomes" id="UP000006383">
    <property type="component" value="Chromosome I"/>
</dbReference>
<dbReference type="GO" id="GO:0009376">
    <property type="term" value="C:HslUV protease complex"/>
    <property type="evidence" value="ECO:0007669"/>
    <property type="project" value="UniProtKB-UniRule"/>
</dbReference>
<dbReference type="GO" id="GO:0005839">
    <property type="term" value="C:proteasome core complex"/>
    <property type="evidence" value="ECO:0007669"/>
    <property type="project" value="InterPro"/>
</dbReference>
<dbReference type="GO" id="GO:0046872">
    <property type="term" value="F:metal ion binding"/>
    <property type="evidence" value="ECO:0007669"/>
    <property type="project" value="UniProtKB-KW"/>
</dbReference>
<dbReference type="GO" id="GO:0004298">
    <property type="term" value="F:threonine-type endopeptidase activity"/>
    <property type="evidence" value="ECO:0007669"/>
    <property type="project" value="UniProtKB-KW"/>
</dbReference>
<dbReference type="GO" id="GO:0051603">
    <property type="term" value="P:proteolysis involved in protein catabolic process"/>
    <property type="evidence" value="ECO:0007669"/>
    <property type="project" value="InterPro"/>
</dbReference>
<dbReference type="CDD" id="cd01913">
    <property type="entry name" value="protease_HslV"/>
    <property type="match status" value="1"/>
</dbReference>
<dbReference type="FunFam" id="3.60.20.10:FF:000002">
    <property type="entry name" value="ATP-dependent protease subunit HslV"/>
    <property type="match status" value="1"/>
</dbReference>
<dbReference type="Gene3D" id="3.60.20.10">
    <property type="entry name" value="Glutamine Phosphoribosylpyrophosphate, subunit 1, domain 1"/>
    <property type="match status" value="1"/>
</dbReference>
<dbReference type="HAMAP" id="MF_00248">
    <property type="entry name" value="HslV"/>
    <property type="match status" value="1"/>
</dbReference>
<dbReference type="InterPro" id="IPR022281">
    <property type="entry name" value="ATP-dep_Prtase_HsIV_su"/>
</dbReference>
<dbReference type="InterPro" id="IPR029055">
    <property type="entry name" value="Ntn_hydrolases_N"/>
</dbReference>
<dbReference type="InterPro" id="IPR001353">
    <property type="entry name" value="Proteasome_sua/b"/>
</dbReference>
<dbReference type="InterPro" id="IPR023333">
    <property type="entry name" value="Proteasome_suB-type"/>
</dbReference>
<dbReference type="NCBIfam" id="TIGR03692">
    <property type="entry name" value="ATP_dep_HslV"/>
    <property type="match status" value="1"/>
</dbReference>
<dbReference type="NCBIfam" id="NF003964">
    <property type="entry name" value="PRK05456.1"/>
    <property type="match status" value="1"/>
</dbReference>
<dbReference type="PANTHER" id="PTHR32194:SF7">
    <property type="entry name" value="ATP-DEPENDENT PROTEASE SUBUNIT HSLV"/>
    <property type="match status" value="1"/>
</dbReference>
<dbReference type="PANTHER" id="PTHR32194">
    <property type="entry name" value="METALLOPROTEASE TLDD"/>
    <property type="match status" value="1"/>
</dbReference>
<dbReference type="Pfam" id="PF00227">
    <property type="entry name" value="Proteasome"/>
    <property type="match status" value="1"/>
</dbReference>
<dbReference type="PIRSF" id="PIRSF039093">
    <property type="entry name" value="HslV"/>
    <property type="match status" value="1"/>
</dbReference>
<dbReference type="SUPFAM" id="SSF56235">
    <property type="entry name" value="N-terminal nucleophile aminohydrolases (Ntn hydrolases)"/>
    <property type="match status" value="1"/>
</dbReference>
<dbReference type="PROSITE" id="PS51476">
    <property type="entry name" value="PROTEASOME_BETA_2"/>
    <property type="match status" value="1"/>
</dbReference>
<keyword id="KW-0021">Allosteric enzyme</keyword>
<keyword id="KW-0963">Cytoplasm</keyword>
<keyword id="KW-0378">Hydrolase</keyword>
<keyword id="KW-0479">Metal-binding</keyword>
<keyword id="KW-0645">Protease</keyword>
<keyword id="KW-0915">Sodium</keyword>
<keyword id="KW-0346">Stress response</keyword>
<keyword id="KW-0888">Threonine protease</keyword>
<comment type="function">
    <text evidence="1">Protease subunit of a proteasome-like degradation complex believed to be a general protein degrading machinery.</text>
</comment>
<comment type="catalytic activity">
    <reaction evidence="1">
        <text>ATP-dependent cleavage of peptide bonds with broad specificity.</text>
        <dbReference type="EC" id="3.4.25.2"/>
    </reaction>
</comment>
<comment type="activity regulation">
    <text evidence="1">Allosterically activated by HslU binding.</text>
</comment>
<comment type="subunit">
    <text evidence="1">A double ring-shaped homohexamer of HslV is capped on each side by a ring-shaped HslU homohexamer. The assembly of the HslU/HslV complex is dependent on binding of ATP.</text>
</comment>
<comment type="subcellular location">
    <subcellularLocation>
        <location evidence="1">Cytoplasm</location>
    </subcellularLocation>
</comment>
<comment type="similarity">
    <text evidence="1">Belongs to the peptidase T1B family. HslV subfamily.</text>
</comment>
<gene>
    <name evidence="1" type="primary">hslV</name>
    <name type="ordered locus">BOV_2000</name>
</gene>
<accession>A5VT38</accession>
<sequence>MIEHNPTTIYGTTIVTVRKDGKVVIAGDGQVSLGNTVMKGNARKVRRIGKGNVIAGFAGATADAFTLLERLEAKLEQYPDQLMRASVELAKDWRTDRYLRKLEAMMLVADSKATLALTGTGDVLEPEQGVMAIGSGGNYALAAARALIETDKSAEEIARKAMNIAADICIYTNHNIIVESLDAQ</sequence>
<proteinExistence type="inferred from homology"/>
<feature type="chain" id="PRO_1000012587" description="ATP-dependent protease subunit HslV">
    <location>
        <begin position="1"/>
        <end position="184"/>
    </location>
</feature>
<feature type="active site" evidence="1">
    <location>
        <position position="12"/>
    </location>
</feature>
<feature type="binding site" evidence="1">
    <location>
        <position position="166"/>
    </location>
    <ligand>
        <name>Na(+)</name>
        <dbReference type="ChEBI" id="CHEBI:29101"/>
    </ligand>
</feature>
<feature type="binding site" evidence="1">
    <location>
        <position position="169"/>
    </location>
    <ligand>
        <name>Na(+)</name>
        <dbReference type="ChEBI" id="CHEBI:29101"/>
    </ligand>
</feature>
<feature type="binding site" evidence="1">
    <location>
        <position position="172"/>
    </location>
    <ligand>
        <name>Na(+)</name>
        <dbReference type="ChEBI" id="CHEBI:29101"/>
    </ligand>
</feature>
<reference key="1">
    <citation type="journal article" date="2009" name="PLoS ONE">
        <title>Genome degradation in Brucella ovis corresponds with narrowing of its host range and tissue tropism.</title>
        <authorList>
            <person name="Tsolis R.M."/>
            <person name="Seshadri R."/>
            <person name="Santos R.L."/>
            <person name="Sangari F.J."/>
            <person name="Lobo J.M."/>
            <person name="de Jong M.F."/>
            <person name="Ren Q."/>
            <person name="Myers G."/>
            <person name="Brinkac L.M."/>
            <person name="Nelson W.C."/>
            <person name="Deboy R.T."/>
            <person name="Angiuoli S."/>
            <person name="Khouri H."/>
            <person name="Dimitrov G."/>
            <person name="Robinson J.R."/>
            <person name="Mulligan S."/>
            <person name="Walker R.L."/>
            <person name="Elzer P.E."/>
            <person name="Hassan K.A."/>
            <person name="Paulsen I.T."/>
        </authorList>
    </citation>
    <scope>NUCLEOTIDE SEQUENCE [LARGE SCALE GENOMIC DNA]</scope>
    <source>
        <strain>ATCC 25840 / 63/290 / NCTC 10512</strain>
    </source>
</reference>
<organism>
    <name type="scientific">Brucella ovis (strain ATCC 25840 / 63/290 / NCTC 10512)</name>
    <dbReference type="NCBI Taxonomy" id="444178"/>
    <lineage>
        <taxon>Bacteria</taxon>
        <taxon>Pseudomonadati</taxon>
        <taxon>Pseudomonadota</taxon>
        <taxon>Alphaproteobacteria</taxon>
        <taxon>Hyphomicrobiales</taxon>
        <taxon>Brucellaceae</taxon>
        <taxon>Brucella/Ochrobactrum group</taxon>
        <taxon>Brucella</taxon>
    </lineage>
</organism>
<protein>
    <recommendedName>
        <fullName evidence="1">ATP-dependent protease subunit HslV</fullName>
        <ecNumber evidence="1">3.4.25.2</ecNumber>
    </recommendedName>
</protein>